<name>PANC_MYCTU</name>
<protein>
    <recommendedName>
        <fullName>Pantothenate synthetase</fullName>
        <shortName>PS</shortName>
        <ecNumber>6.3.2.1</ecNumber>
    </recommendedName>
    <alternativeName>
        <fullName>Pantoate--beta-alanine ligase</fullName>
    </alternativeName>
    <alternativeName>
        <fullName>Pantoate-activating enzyme</fullName>
    </alternativeName>
</protein>
<evidence type="ECO:0000269" key="1">
    <source>
    </source>
</evidence>
<evidence type="ECO:0000269" key="2">
    <source>
    </source>
</evidence>
<evidence type="ECO:0000269" key="3">
    <source>
    </source>
</evidence>
<evidence type="ECO:0000269" key="4">
    <source>
    </source>
</evidence>
<evidence type="ECO:0000269" key="5">
    <source>
    </source>
</evidence>
<evidence type="ECO:0000269" key="6">
    <source>
    </source>
</evidence>
<evidence type="ECO:0000305" key="7"/>
<evidence type="ECO:0007744" key="8">
    <source>
    </source>
</evidence>
<evidence type="ECO:0007829" key="9">
    <source>
        <dbReference type="PDB" id="1MOP"/>
    </source>
</evidence>
<evidence type="ECO:0007829" key="10">
    <source>
        <dbReference type="PDB" id="3COV"/>
    </source>
</evidence>
<evidence type="ECO:0007829" key="11">
    <source>
        <dbReference type="PDB" id="3IVC"/>
    </source>
</evidence>
<comment type="function">
    <text evidence="1">Catalyzes the condensation of pantoate with beta-alanine in an ATP-dependent reaction via a pantoyl-adenylate intermediate.</text>
</comment>
<comment type="catalytic activity">
    <reaction evidence="3">
        <text>(R)-pantoate + beta-alanine + ATP = (R)-pantothenate + AMP + diphosphate + H(+)</text>
        <dbReference type="Rhea" id="RHEA:10912"/>
        <dbReference type="ChEBI" id="CHEBI:15378"/>
        <dbReference type="ChEBI" id="CHEBI:15980"/>
        <dbReference type="ChEBI" id="CHEBI:29032"/>
        <dbReference type="ChEBI" id="CHEBI:30616"/>
        <dbReference type="ChEBI" id="CHEBI:33019"/>
        <dbReference type="ChEBI" id="CHEBI:57966"/>
        <dbReference type="ChEBI" id="CHEBI:456215"/>
        <dbReference type="EC" id="6.3.2.1"/>
    </reaction>
</comment>
<comment type="activity regulation">
    <text evidence="1">Pantothenate exhibits uncompetitive inhibition toward both D-pantoate and ATP, and non-competitive inhibition toward beta-alanine. AMPCPP exhibits competitive inhibition toward ATP, uncompetitive inhibition toward beta-alanine, and non-competitive inhibition toward D-pantoate. The enzyme is most active in the presence of magnesium or manganese. Other divalent cations (cobalt, nickel, zinc) are less effective.</text>
</comment>
<comment type="biophysicochemical properties">
    <kinetics>
        <KM evidence="1 4">130 uM for D-pantoate</KM>
        <KM evidence="1 4">800 uM for beta-alanine</KM>
        <KM evidence="1 4">2600 uM for ATP</KM>
        <KM evidence="1 4">25.4 mM for 2-mercaptoethylamine</KM>
        <KM evidence="1 4">36 mM for carbamate</KM>
        <KM evidence="1 4">72 mM for 5-aminovalerate</KM>
        <KM evidence="1 4">79 mM for methylamine</KM>
        <KM evidence="1 4">84 mM for glycine</KM>
        <KM evidence="1 4">93 mM for ethylamine</KM>
        <KM evidence="1 4">103 mM for taurine</KM>
        <KM evidence="1 4">108 mM for glycolate</KM>
        <KM evidence="1 4">335 mM for gamma-aminobutyrate</KM>
        <KM evidence="1 4">580 mM for gamma-amino-beta-hydroxybutyrate</KM>
    </kinetics>
</comment>
<comment type="pathway">
    <text>Cofactor biosynthesis; (R)-pantothenate biosynthesis; (R)-pantothenate from (R)-pantoate and beta-alanine: step 1/1.</text>
</comment>
<comment type="subcellular location">
    <subcellularLocation>
        <location evidence="7">Cytoplasm</location>
    </subcellularLocation>
</comment>
<comment type="mass spectrometry"/>
<comment type="disruption phenotype">
    <text evidence="2 6">Simultaneous disruption of panD and panC gives a mutant unable to grow in the absence of panothenate. The double mutant has a highly attenuated disease response in BALB/c and SCID mice; immunocompromised BALB/c SCID mice survive on average 36 weeks as opposed to 5 weeks for mice infected with wild-type bacteria, while immunocompetent BALB/c mice survive indefinitely. In wild-type mice bacteria grow for 3 weeks then undergo a steady decline, bacteria persist over 8 months in SCID mice (PubMed:12219086). The double mutant is sensitive to PZA but not POA in liquid culture, beta-alanine but not pantothenate antagonize the effect of PZA at pH 5.8 (PubMed:25246400).</text>
</comment>
<comment type="biotechnology">
    <text evidence="2">Subcutaneous immunization with the double panD and panC bacterial disruption mutant protects mice for over a year against subsequent virulent M.tuberculosis (strain Erdman) infections; mice show mild lung inflammation and fibrosis despite a chronic bacterila infection. This is a promising attenuated vaccine strain.</text>
</comment>
<comment type="miscellaneous">
    <text>The reaction proceeds by a bi uni uni bi ping pong mechanism.</text>
</comment>
<comment type="miscellaneous">
    <text>Was identified as a high-confidence drug target.</text>
</comment>
<comment type="similarity">
    <text evidence="7">Belongs to the pantothenate synthetase family.</text>
</comment>
<proteinExistence type="evidence at protein level"/>
<organism>
    <name type="scientific">Mycobacterium tuberculosis (strain ATCC 25618 / H37Rv)</name>
    <dbReference type="NCBI Taxonomy" id="83332"/>
    <lineage>
        <taxon>Bacteria</taxon>
        <taxon>Bacillati</taxon>
        <taxon>Actinomycetota</taxon>
        <taxon>Actinomycetes</taxon>
        <taxon>Mycobacteriales</taxon>
        <taxon>Mycobacteriaceae</taxon>
        <taxon>Mycobacterium</taxon>
        <taxon>Mycobacterium tuberculosis complex</taxon>
    </lineage>
</organism>
<sequence>MTIPAFHPGELNVYSAPGDVADVSRALRLTGRRVMLVPTMGALHEGHLALVRAAKRVPGSVVVVSIFVNPMQFGAGEDLDAYPRTPDDDLAQLRAEGVEIAFTPTTAAMYPDGLRTTVQPGPLAAELEGGPRPTHFAGVLTVVLKLLQIVRPDRVFFGEKDYQQLVLIRQLVADFNLDVAVVGVPTVREADGLAMSSRNRYLDPAQRAAAVALSAALTAAAHAATAGAQAALDAARAVLDAAPGVAVDYLELRDIGLGPMPLNGSGRLLVAARLGTTRLLDNIAIEIGTFAGTDRPDGYRAILESHWRN</sequence>
<feature type="initiator methionine" description="Removed" evidence="1 8">
    <location>
        <position position="1"/>
    </location>
</feature>
<feature type="chain" id="PRO_0000128245" description="Pantothenate synthetase">
    <location>
        <begin position="2"/>
        <end position="309"/>
    </location>
</feature>
<feature type="active site" description="Proton donor">
    <location>
        <position position="47"/>
    </location>
</feature>
<feature type="binding site" evidence="5">
    <location>
        <begin position="40"/>
        <end position="47"/>
    </location>
    <ligand>
        <name>ATP</name>
        <dbReference type="ChEBI" id="CHEBI:30616"/>
    </ligand>
</feature>
<feature type="binding site">
    <location>
        <position position="72"/>
    </location>
    <ligand>
        <name>(R)-pantoate</name>
        <dbReference type="ChEBI" id="CHEBI:15980"/>
    </ligand>
</feature>
<feature type="binding site">
    <location>
        <position position="72"/>
    </location>
    <ligand>
        <name>beta-alanine</name>
        <dbReference type="ChEBI" id="CHEBI:57966"/>
    </ligand>
</feature>
<feature type="binding site">
    <location>
        <position position="88"/>
    </location>
    <ligand>
        <name>Mg(2+)</name>
        <dbReference type="ChEBI" id="CHEBI:18420"/>
    </ligand>
</feature>
<feature type="binding site">
    <location>
        <position position="89"/>
    </location>
    <ligand>
        <name>Mg(2+)</name>
        <dbReference type="ChEBI" id="CHEBI:18420"/>
    </ligand>
</feature>
<feature type="binding site">
    <location>
        <position position="92"/>
    </location>
    <ligand>
        <name>Mg(2+)</name>
        <dbReference type="ChEBI" id="CHEBI:18420"/>
    </ligand>
</feature>
<feature type="binding site" evidence="5">
    <location>
        <begin position="158"/>
        <end position="161"/>
    </location>
    <ligand>
        <name>ATP</name>
        <dbReference type="ChEBI" id="CHEBI:30616"/>
    </ligand>
</feature>
<feature type="binding site">
    <location>
        <position position="164"/>
    </location>
    <ligand>
        <name>(R)-pantoate</name>
        <dbReference type="ChEBI" id="CHEBI:15980"/>
    </ligand>
</feature>
<feature type="binding site" evidence="5">
    <location>
        <position position="187"/>
    </location>
    <ligand>
        <name>ATP</name>
        <dbReference type="ChEBI" id="CHEBI:30616"/>
    </ligand>
</feature>
<feature type="binding site" evidence="5">
    <location>
        <begin position="195"/>
        <end position="198"/>
    </location>
    <ligand>
        <name>ATP</name>
        <dbReference type="ChEBI" id="CHEBI:30616"/>
    </ligand>
</feature>
<feature type="modified residue" description="N-acetylthreonine" evidence="8">
    <location>
        <position position="2"/>
    </location>
</feature>
<feature type="mutagenesis site" description="More than 1000-fold reduction in activity and 52-fold decrease in adenylate formation." evidence="4">
    <original>H</original>
    <variation>A</variation>
    <location>
        <position position="44"/>
    </location>
</feature>
<feature type="mutagenesis site" description="More than 1000-fold reduction in activity and 60-fold decrease in adenylate formation. 10-fold decrease in the affinity for ATP." evidence="4">
    <original>H</original>
    <variation>A</variation>
    <location>
        <position position="47"/>
    </location>
</feature>
<feature type="mutagenesis site" description="More than 1000-fold reduction in activity and 50-fold decrease in adenylate formation." evidence="4">
    <original>N</original>
    <variation>A</variation>
    <location>
        <position position="69"/>
    </location>
</feature>
<feature type="mutagenesis site" description="More than 1000-fold reduction in activity and 45-fold decrease in adenylate formation." evidence="4">
    <original>Q</original>
    <variation>A</variation>
    <location>
        <position position="72"/>
    </location>
</feature>
<feature type="mutagenesis site" description="No effect." evidence="3">
    <original>E</original>
    <variation>G</variation>
    <location>
        <position position="77"/>
    </location>
</feature>
<feature type="mutagenesis site" description="More than 1000-fold reduction in activity and 50-fold decrease in the affinity for ATP." evidence="4">
    <original>K</original>
    <variation>A</variation>
    <location>
        <position position="160"/>
    </location>
</feature>
<feature type="mutagenesis site" description="More than 1000-fold reduction in activity and 120-fold decrease in adenylate formation. The enzymatic activity and the affinity for beta-alanine can be increased 10- and 3-fold, respectively, by alkylation of cysteine of mutant C-160." evidence="4">
    <original>K</original>
    <variation>C</variation>
    <location>
        <position position="160"/>
    </location>
</feature>
<feature type="mutagenesis site" description="50-fold reduction in activity and slight reduction in the affinity for beta-alanine. 30- and 40-fold decrease in adenylate formation and pantothenate formation, respectively." evidence="4">
    <original>Q</original>
    <variation>A</variation>
    <location>
        <position position="164"/>
    </location>
</feature>
<feature type="strand" evidence="10">
    <location>
        <begin position="12"/>
        <end position="14"/>
    </location>
</feature>
<feature type="helix" evidence="10">
    <location>
        <begin position="17"/>
        <end position="29"/>
    </location>
</feature>
<feature type="strand" evidence="10">
    <location>
        <begin position="33"/>
        <end position="39"/>
    </location>
</feature>
<feature type="helix" evidence="10">
    <location>
        <begin position="45"/>
        <end position="55"/>
    </location>
</feature>
<feature type="strand" evidence="10">
    <location>
        <begin position="60"/>
        <end position="66"/>
    </location>
</feature>
<feature type="helix" evidence="10">
    <location>
        <begin position="70"/>
        <end position="72"/>
    </location>
</feature>
<feature type="strand" evidence="10">
    <location>
        <begin position="75"/>
        <end position="77"/>
    </location>
</feature>
<feature type="helix" evidence="10">
    <location>
        <begin position="78"/>
        <end position="81"/>
    </location>
</feature>
<feature type="helix" evidence="10">
    <location>
        <begin position="86"/>
        <end position="95"/>
    </location>
</feature>
<feature type="strand" evidence="10">
    <location>
        <begin position="100"/>
        <end position="102"/>
    </location>
</feature>
<feature type="helix" evidence="10">
    <location>
        <begin position="106"/>
        <end position="109"/>
    </location>
</feature>
<feature type="strand" evidence="10">
    <location>
        <begin position="116"/>
        <end position="119"/>
    </location>
</feature>
<feature type="helix" evidence="10">
    <location>
        <begin position="122"/>
        <end position="125"/>
    </location>
</feature>
<feature type="helix" evidence="10">
    <location>
        <begin position="127"/>
        <end position="129"/>
    </location>
</feature>
<feature type="helix" evidence="10">
    <location>
        <begin position="135"/>
        <end position="150"/>
    </location>
</feature>
<feature type="strand" evidence="10">
    <location>
        <begin position="153"/>
        <end position="158"/>
    </location>
</feature>
<feature type="helix" evidence="9">
    <location>
        <begin position="159"/>
        <end position="161"/>
    </location>
</feature>
<feature type="helix" evidence="10">
    <location>
        <begin position="162"/>
        <end position="174"/>
    </location>
</feature>
<feature type="strand" evidence="10">
    <location>
        <begin position="180"/>
        <end position="184"/>
    </location>
</feature>
<feature type="helix" evidence="10">
    <location>
        <begin position="199"/>
        <end position="201"/>
    </location>
</feature>
<feature type="helix" evidence="10">
    <location>
        <begin position="204"/>
        <end position="209"/>
    </location>
</feature>
<feature type="helix" evidence="10">
    <location>
        <begin position="212"/>
        <end position="223"/>
    </location>
</feature>
<feature type="helix" evidence="10">
    <location>
        <begin position="224"/>
        <end position="226"/>
    </location>
</feature>
<feature type="helix" evidence="10">
    <location>
        <begin position="228"/>
        <end position="240"/>
    </location>
</feature>
<feature type="strand" evidence="10">
    <location>
        <begin position="246"/>
        <end position="254"/>
    </location>
</feature>
<feature type="strand" evidence="10">
    <location>
        <begin position="258"/>
        <end position="260"/>
    </location>
</feature>
<feature type="strand" evidence="10">
    <location>
        <begin position="264"/>
        <end position="274"/>
    </location>
</feature>
<feature type="strand" evidence="10">
    <location>
        <begin position="277"/>
        <end position="286"/>
    </location>
</feature>
<feature type="helix" evidence="11">
    <location>
        <begin position="288"/>
        <end position="290"/>
    </location>
</feature>
<feature type="strand" evidence="11">
    <location>
        <begin position="294"/>
        <end position="296"/>
    </location>
</feature>
<dbReference type="EC" id="6.3.2.1"/>
<dbReference type="EMBL" id="AL123456">
    <property type="protein sequence ID" value="CCP46425.1"/>
    <property type="molecule type" value="Genomic_DNA"/>
</dbReference>
<dbReference type="PIR" id="C70955">
    <property type="entry name" value="C70955"/>
</dbReference>
<dbReference type="RefSeq" id="NP_218119.1">
    <property type="nucleotide sequence ID" value="NC_000962.3"/>
</dbReference>
<dbReference type="RefSeq" id="WP_003419526.1">
    <property type="nucleotide sequence ID" value="NZ_NVQJ01000056.1"/>
</dbReference>
<dbReference type="PDB" id="1MOP">
    <property type="method" value="X-ray"/>
    <property type="resolution" value="1.60 A"/>
    <property type="chains" value="A/B=3-300"/>
</dbReference>
<dbReference type="PDB" id="1N2B">
    <property type="method" value="X-ray"/>
    <property type="resolution" value="1.70 A"/>
    <property type="chains" value="A/B=3-300"/>
</dbReference>
<dbReference type="PDB" id="1N2E">
    <property type="method" value="X-ray"/>
    <property type="resolution" value="1.60 A"/>
    <property type="chains" value="A/B=3-300"/>
</dbReference>
<dbReference type="PDB" id="1N2G">
    <property type="method" value="X-ray"/>
    <property type="resolution" value="1.80 A"/>
    <property type="chains" value="A/B=3-300"/>
</dbReference>
<dbReference type="PDB" id="1N2H">
    <property type="method" value="X-ray"/>
    <property type="resolution" value="2.00 A"/>
    <property type="chains" value="A/B=3-300"/>
</dbReference>
<dbReference type="PDB" id="1N2I">
    <property type="method" value="X-ray"/>
    <property type="resolution" value="1.70 A"/>
    <property type="chains" value="A/B=3-300"/>
</dbReference>
<dbReference type="PDB" id="1N2J">
    <property type="method" value="X-ray"/>
    <property type="resolution" value="1.80 A"/>
    <property type="chains" value="A/B=3-300"/>
</dbReference>
<dbReference type="PDB" id="1N2O">
    <property type="method" value="X-ray"/>
    <property type="resolution" value="2.10 A"/>
    <property type="chains" value="A/B=3-300"/>
</dbReference>
<dbReference type="PDB" id="2A7X">
    <property type="method" value="X-ray"/>
    <property type="resolution" value="1.70 A"/>
    <property type="chains" value="A=3-300"/>
</dbReference>
<dbReference type="PDB" id="2A84">
    <property type="method" value="X-ray"/>
    <property type="resolution" value="1.55 A"/>
    <property type="chains" value="A=3-300"/>
</dbReference>
<dbReference type="PDB" id="2A86">
    <property type="method" value="X-ray"/>
    <property type="resolution" value="1.85 A"/>
    <property type="chains" value="A/B=3-300"/>
</dbReference>
<dbReference type="PDB" id="2A88">
    <property type="method" value="X-ray"/>
    <property type="resolution" value="1.70 A"/>
    <property type="chains" value="A=3-300"/>
</dbReference>
<dbReference type="PDB" id="3COV">
    <property type="method" value="X-ray"/>
    <property type="resolution" value="1.50 A"/>
    <property type="chains" value="A/B=3-300"/>
</dbReference>
<dbReference type="PDB" id="3COW">
    <property type="method" value="X-ray"/>
    <property type="resolution" value="1.80 A"/>
    <property type="chains" value="A/B=3-300"/>
</dbReference>
<dbReference type="PDB" id="3COY">
    <property type="method" value="X-ray"/>
    <property type="resolution" value="2.03 A"/>
    <property type="chains" value="A/B=3-300"/>
</dbReference>
<dbReference type="PDB" id="3COZ">
    <property type="method" value="X-ray"/>
    <property type="resolution" value="2.00 A"/>
    <property type="chains" value="A/B=3-300"/>
</dbReference>
<dbReference type="PDB" id="3IMC">
    <property type="method" value="X-ray"/>
    <property type="resolution" value="1.60 A"/>
    <property type="chains" value="A/B=3-300"/>
</dbReference>
<dbReference type="PDB" id="3IME">
    <property type="method" value="X-ray"/>
    <property type="resolution" value="2.39 A"/>
    <property type="chains" value="A/B=3-300"/>
</dbReference>
<dbReference type="PDB" id="3IMG">
    <property type="method" value="X-ray"/>
    <property type="resolution" value="1.80 A"/>
    <property type="chains" value="A/B=3-300"/>
</dbReference>
<dbReference type="PDB" id="3IOB">
    <property type="method" value="X-ray"/>
    <property type="resolution" value="1.80 A"/>
    <property type="chains" value="A/B=3-300"/>
</dbReference>
<dbReference type="PDB" id="3IOC">
    <property type="method" value="X-ray"/>
    <property type="resolution" value="2.50 A"/>
    <property type="chains" value="A/B=3-300"/>
</dbReference>
<dbReference type="PDB" id="3IOD">
    <property type="method" value="X-ray"/>
    <property type="resolution" value="1.75 A"/>
    <property type="chains" value="A/B=3-300"/>
</dbReference>
<dbReference type="PDB" id="3IOE">
    <property type="method" value="X-ray"/>
    <property type="resolution" value="1.95 A"/>
    <property type="chains" value="A/B=3-300"/>
</dbReference>
<dbReference type="PDB" id="3ISJ">
    <property type="method" value="X-ray"/>
    <property type="resolution" value="2.20 A"/>
    <property type="chains" value="A/B=3-300"/>
</dbReference>
<dbReference type="PDB" id="3IUB">
    <property type="method" value="X-ray"/>
    <property type="resolution" value="1.50 A"/>
    <property type="chains" value="A/B=3-301"/>
</dbReference>
<dbReference type="PDB" id="3IUE">
    <property type="method" value="X-ray"/>
    <property type="resolution" value="1.73 A"/>
    <property type="chains" value="A/B=3-301"/>
</dbReference>
<dbReference type="PDB" id="3IVC">
    <property type="method" value="X-ray"/>
    <property type="resolution" value="2.13 A"/>
    <property type="chains" value="A/B=3-301"/>
</dbReference>
<dbReference type="PDB" id="3IVG">
    <property type="method" value="X-ray"/>
    <property type="resolution" value="1.95 A"/>
    <property type="chains" value="A/B=3-301"/>
</dbReference>
<dbReference type="PDB" id="3IVX">
    <property type="method" value="X-ray"/>
    <property type="resolution" value="1.73 A"/>
    <property type="chains" value="A/B=3-301"/>
</dbReference>
<dbReference type="PDB" id="3LE8">
    <property type="method" value="X-ray"/>
    <property type="resolution" value="1.70 A"/>
    <property type="chains" value="A/B=3-300"/>
</dbReference>
<dbReference type="PDB" id="4DDH">
    <property type="method" value="X-ray"/>
    <property type="resolution" value="2.07 A"/>
    <property type="chains" value="A/B=3-301"/>
</dbReference>
<dbReference type="PDB" id="4DDK">
    <property type="method" value="X-ray"/>
    <property type="resolution" value="1.75 A"/>
    <property type="chains" value="A/B=3-301"/>
</dbReference>
<dbReference type="PDB" id="4DDM">
    <property type="method" value="X-ray"/>
    <property type="resolution" value="1.83 A"/>
    <property type="chains" value="A/B=3-301"/>
</dbReference>
<dbReference type="PDB" id="4DE5">
    <property type="method" value="X-ray"/>
    <property type="resolution" value="2.25 A"/>
    <property type="chains" value="A/B=3-301"/>
</dbReference>
<dbReference type="PDB" id="4EF6">
    <property type="method" value="X-ray"/>
    <property type="resolution" value="1.94 A"/>
    <property type="chains" value="A/B=3-300"/>
</dbReference>
<dbReference type="PDB" id="4EFK">
    <property type="method" value="X-ray"/>
    <property type="resolution" value="1.70 A"/>
    <property type="chains" value="A/B=3-300"/>
</dbReference>
<dbReference type="PDB" id="4FZJ">
    <property type="method" value="X-ray"/>
    <property type="resolution" value="1.63 A"/>
    <property type="chains" value="A/B=3-301"/>
</dbReference>
<dbReference type="PDB" id="4G5F">
    <property type="method" value="X-ray"/>
    <property type="resolution" value="2.33 A"/>
    <property type="chains" value="A/B=3-309"/>
</dbReference>
<dbReference type="PDB" id="4G5Y">
    <property type="method" value="X-ray"/>
    <property type="resolution" value="1.80 A"/>
    <property type="chains" value="A/B=3-300"/>
</dbReference>
<dbReference type="PDBsum" id="1MOP"/>
<dbReference type="PDBsum" id="1N2B"/>
<dbReference type="PDBsum" id="1N2E"/>
<dbReference type="PDBsum" id="1N2G"/>
<dbReference type="PDBsum" id="1N2H"/>
<dbReference type="PDBsum" id="1N2I"/>
<dbReference type="PDBsum" id="1N2J"/>
<dbReference type="PDBsum" id="1N2O"/>
<dbReference type="PDBsum" id="2A7X"/>
<dbReference type="PDBsum" id="2A84"/>
<dbReference type="PDBsum" id="2A86"/>
<dbReference type="PDBsum" id="2A88"/>
<dbReference type="PDBsum" id="3COV"/>
<dbReference type="PDBsum" id="3COW"/>
<dbReference type="PDBsum" id="3COY"/>
<dbReference type="PDBsum" id="3COZ"/>
<dbReference type="PDBsum" id="3IMC"/>
<dbReference type="PDBsum" id="3IME"/>
<dbReference type="PDBsum" id="3IMG"/>
<dbReference type="PDBsum" id="3IOB"/>
<dbReference type="PDBsum" id="3IOC"/>
<dbReference type="PDBsum" id="3IOD"/>
<dbReference type="PDBsum" id="3IOE"/>
<dbReference type="PDBsum" id="3ISJ"/>
<dbReference type="PDBsum" id="3IUB"/>
<dbReference type="PDBsum" id="3IUE"/>
<dbReference type="PDBsum" id="3IVC"/>
<dbReference type="PDBsum" id="3IVG"/>
<dbReference type="PDBsum" id="3IVX"/>
<dbReference type="PDBsum" id="3LE8"/>
<dbReference type="PDBsum" id="4DDH"/>
<dbReference type="PDBsum" id="4DDK"/>
<dbReference type="PDBsum" id="4DDM"/>
<dbReference type="PDBsum" id="4DE5"/>
<dbReference type="PDBsum" id="4EF6"/>
<dbReference type="PDBsum" id="4EFK"/>
<dbReference type="PDBsum" id="4FZJ"/>
<dbReference type="PDBsum" id="4G5F"/>
<dbReference type="PDBsum" id="4G5Y"/>
<dbReference type="SMR" id="P9WIL5"/>
<dbReference type="FunCoup" id="P9WIL5">
    <property type="interactions" value="352"/>
</dbReference>
<dbReference type="STRING" id="83332.Rv3602c"/>
<dbReference type="BindingDB" id="P9WIL5"/>
<dbReference type="ChEMBL" id="CHEMBL6069"/>
<dbReference type="DrugBank" id="DB01930">
    <property type="generic name" value="2,4-Dihydroxy-3,3-Dimethyl-Butyrate"/>
</dbReference>
<dbReference type="DrugBank" id="DB02596">
    <property type="generic name" value="alpha,beta-Methyleneadenosine 5'-triphosphate"/>
</dbReference>
<dbReference type="DrugBank" id="DB03107">
    <property type="generic name" value="beta-Alanine"/>
</dbReference>
<dbReference type="DrugBank" id="DB02694">
    <property type="generic name" value="Pantoyl Adenylate"/>
</dbReference>
<dbReference type="iPTMnet" id="P9WIL5"/>
<dbReference type="PaxDb" id="83332-Rv3602c"/>
<dbReference type="DNASU" id="885459"/>
<dbReference type="GeneID" id="885459"/>
<dbReference type="KEGG" id="mtu:Rv3602c"/>
<dbReference type="KEGG" id="mtv:RVBD_3602c"/>
<dbReference type="TubercuList" id="Rv3602c"/>
<dbReference type="eggNOG" id="COG0414">
    <property type="taxonomic scope" value="Bacteria"/>
</dbReference>
<dbReference type="InParanoid" id="P9WIL5"/>
<dbReference type="OrthoDB" id="9773087at2"/>
<dbReference type="PhylomeDB" id="P9WIL5"/>
<dbReference type="BRENDA" id="6.3.2.1">
    <property type="organism ID" value="3445"/>
</dbReference>
<dbReference type="SABIO-RK" id="P9WIL5"/>
<dbReference type="UniPathway" id="UPA00028">
    <property type="reaction ID" value="UER00005"/>
</dbReference>
<dbReference type="EvolutionaryTrace" id="P9WIL5"/>
<dbReference type="Proteomes" id="UP000001584">
    <property type="component" value="Chromosome"/>
</dbReference>
<dbReference type="GO" id="GO:0005829">
    <property type="term" value="C:cytosol"/>
    <property type="evidence" value="ECO:0000318"/>
    <property type="project" value="GO_Central"/>
</dbReference>
<dbReference type="GO" id="GO:0005524">
    <property type="term" value="F:ATP binding"/>
    <property type="evidence" value="ECO:0000314"/>
    <property type="project" value="MTBBASE"/>
</dbReference>
<dbReference type="GO" id="GO:0000287">
    <property type="term" value="F:magnesium ion binding"/>
    <property type="evidence" value="ECO:0000314"/>
    <property type="project" value="MTBBASE"/>
</dbReference>
<dbReference type="GO" id="GO:0030145">
    <property type="term" value="F:manganese ion binding"/>
    <property type="evidence" value="ECO:0000314"/>
    <property type="project" value="MTBBASE"/>
</dbReference>
<dbReference type="GO" id="GO:0004592">
    <property type="term" value="F:pantoate-beta-alanine ligase activity"/>
    <property type="evidence" value="ECO:0000314"/>
    <property type="project" value="MTBBASE"/>
</dbReference>
<dbReference type="GO" id="GO:0019482">
    <property type="term" value="P:beta-alanine metabolic process"/>
    <property type="evidence" value="ECO:0000314"/>
    <property type="project" value="MTBBASE"/>
</dbReference>
<dbReference type="GO" id="GO:0015940">
    <property type="term" value="P:pantothenate biosynthetic process"/>
    <property type="evidence" value="ECO:0000314"/>
    <property type="project" value="MTBBASE"/>
</dbReference>
<dbReference type="CDD" id="cd00560">
    <property type="entry name" value="PanC"/>
    <property type="match status" value="1"/>
</dbReference>
<dbReference type="FunFam" id="3.30.1300.10:FF:000005">
    <property type="entry name" value="Pantothenate synthetase"/>
    <property type="match status" value="1"/>
</dbReference>
<dbReference type="FunFam" id="3.40.50.620:FF:000114">
    <property type="entry name" value="Pantothenate synthetase"/>
    <property type="match status" value="1"/>
</dbReference>
<dbReference type="Gene3D" id="3.40.50.620">
    <property type="entry name" value="HUPs"/>
    <property type="match status" value="1"/>
</dbReference>
<dbReference type="Gene3D" id="3.30.1300.10">
    <property type="entry name" value="Pantoate-beta-alanine ligase, C-terminal domain"/>
    <property type="match status" value="1"/>
</dbReference>
<dbReference type="HAMAP" id="MF_00158">
    <property type="entry name" value="PanC"/>
    <property type="match status" value="1"/>
</dbReference>
<dbReference type="InterPro" id="IPR003721">
    <property type="entry name" value="Pantoate_ligase"/>
</dbReference>
<dbReference type="InterPro" id="IPR042176">
    <property type="entry name" value="Pantoate_ligase_C"/>
</dbReference>
<dbReference type="InterPro" id="IPR014729">
    <property type="entry name" value="Rossmann-like_a/b/a_fold"/>
</dbReference>
<dbReference type="NCBIfam" id="TIGR00018">
    <property type="entry name" value="panC"/>
    <property type="match status" value="1"/>
</dbReference>
<dbReference type="PANTHER" id="PTHR21299">
    <property type="entry name" value="CYTIDYLATE KINASE/PANTOATE-BETA-ALANINE LIGASE"/>
    <property type="match status" value="1"/>
</dbReference>
<dbReference type="PANTHER" id="PTHR21299:SF1">
    <property type="entry name" value="PANTOATE--BETA-ALANINE LIGASE"/>
    <property type="match status" value="1"/>
</dbReference>
<dbReference type="Pfam" id="PF02569">
    <property type="entry name" value="Pantoate_ligase"/>
    <property type="match status" value="1"/>
</dbReference>
<dbReference type="SUPFAM" id="SSF52374">
    <property type="entry name" value="Nucleotidylyl transferase"/>
    <property type="match status" value="1"/>
</dbReference>
<gene>
    <name type="primary">panC</name>
    <name type="ordered locus">Rv3602c</name>
    <name type="ORF">MTCY07H7B.20</name>
</gene>
<accession>P9WIL5</accession>
<accession>L0TG74</accession>
<accession>O06280</accession>
<accession>P0A5R0</accession>
<reference key="1">
    <citation type="journal article" date="1998" name="Nature">
        <title>Deciphering the biology of Mycobacterium tuberculosis from the complete genome sequence.</title>
        <authorList>
            <person name="Cole S.T."/>
            <person name="Brosch R."/>
            <person name="Parkhill J."/>
            <person name="Garnier T."/>
            <person name="Churcher C.M."/>
            <person name="Harris D.E."/>
            <person name="Gordon S.V."/>
            <person name="Eiglmeier K."/>
            <person name="Gas S."/>
            <person name="Barry C.E. III"/>
            <person name="Tekaia F."/>
            <person name="Badcock K."/>
            <person name="Basham D."/>
            <person name="Brown D."/>
            <person name="Chillingworth T."/>
            <person name="Connor R."/>
            <person name="Davies R.M."/>
            <person name="Devlin K."/>
            <person name="Feltwell T."/>
            <person name="Gentles S."/>
            <person name="Hamlin N."/>
            <person name="Holroyd S."/>
            <person name="Hornsby T."/>
            <person name="Jagels K."/>
            <person name="Krogh A."/>
            <person name="McLean J."/>
            <person name="Moule S."/>
            <person name="Murphy L.D."/>
            <person name="Oliver S."/>
            <person name="Osborne J."/>
            <person name="Quail M.A."/>
            <person name="Rajandream M.A."/>
            <person name="Rogers J."/>
            <person name="Rutter S."/>
            <person name="Seeger K."/>
            <person name="Skelton S."/>
            <person name="Squares S."/>
            <person name="Squares R."/>
            <person name="Sulston J.E."/>
            <person name="Taylor K."/>
            <person name="Whitehead S."/>
            <person name="Barrell B.G."/>
        </authorList>
    </citation>
    <scope>NUCLEOTIDE SEQUENCE [LARGE SCALE GENOMIC DNA]</scope>
    <source>
        <strain>ATCC 25618 / H37Rv</strain>
    </source>
</reference>
<reference key="2">
    <citation type="journal article" date="2001" name="Biochemistry">
        <title>Steady-state and pre-steady-state kinetic analysis of Mycobacterium tuberculosis pantothenate synthetase.</title>
        <authorList>
            <person name="Zheng R."/>
            <person name="Blanchard J.S."/>
        </authorList>
    </citation>
    <scope>PROTEIN SEQUENCE OF 2-11</scope>
    <scope>FUNCTION</scope>
    <scope>MASS SPECTROMETRY</scope>
    <scope>BIOPHYSICOCHEMICAL PROPERTIES</scope>
    <scope>ACTIVITY REGULATION</scope>
    <scope>REACTION MECHANISM</scope>
    <scope>SUBUNIT</scope>
</reference>
<reference key="3">
    <citation type="journal article" date="2002" name="Nat. Med.">
        <title>A pantothenate auxotroph of Mycobacterium tuberculosis is highly attenuated and protects mice against tuberculosis.</title>
        <authorList>
            <person name="Sambandamurthy V.K."/>
            <person name="Wang X."/>
            <person name="Chen B."/>
            <person name="Russell R.G."/>
            <person name="Derrick S."/>
            <person name="Collins F.M."/>
            <person name="Morris S.L."/>
            <person name="Jacobs W.R. Jr."/>
        </authorList>
    </citation>
    <scope>DISRUPTION PHENOTYPE</scope>
    <scope>BIOTECHNOLOGY</scope>
    <source>
        <strain>H37Rv</strain>
    </source>
</reference>
<reference key="4">
    <citation type="journal article" date="2004" name="Biochemistry">
        <title>Active site residues in Mycobacterium tuberculosis pantothenate synthetase required in the formation and stabilization of the adenylate intermediate.</title>
        <authorList>
            <person name="Zheng R."/>
            <person name="Dam T.K."/>
            <person name="Brewer C.F."/>
            <person name="Blanchard J.S."/>
        </authorList>
    </citation>
    <scope>MUTAGENESIS OF HIS-44; HIS-47; ASN-69; GLN-72; LYS-160 AND GLN-164</scope>
    <scope>BIOPHYSICOCHEMICAL PROPERTIES</scope>
</reference>
<reference key="5">
    <citation type="journal article" date="2008" name="BMC Syst. Biol.">
        <title>targetTB: a target identification pipeline for Mycobacterium tuberculosis through an interactome, reactome and genome-scale structural analysis.</title>
        <authorList>
            <person name="Raman K."/>
            <person name="Yeturu K."/>
            <person name="Chandra N."/>
        </authorList>
    </citation>
    <scope>IDENTIFICATION AS A DRUG TARGET [LARGE SCALE ANALYSIS]</scope>
</reference>
<reference key="6">
    <citation type="journal article" date="2011" name="Mol. Cell. Proteomics">
        <title>Proteogenomic analysis of Mycobacterium tuberculosis by high resolution mass spectrometry.</title>
        <authorList>
            <person name="Kelkar D.S."/>
            <person name="Kumar D."/>
            <person name="Kumar P."/>
            <person name="Balakrishnan L."/>
            <person name="Muthusamy B."/>
            <person name="Yadav A.K."/>
            <person name="Shrivastava P."/>
            <person name="Marimuthu A."/>
            <person name="Anand S."/>
            <person name="Sundaram H."/>
            <person name="Kingsbury R."/>
            <person name="Harsha H.C."/>
            <person name="Nair B."/>
            <person name="Prasad T.S."/>
            <person name="Chauhan D.S."/>
            <person name="Katoch K."/>
            <person name="Katoch V.M."/>
            <person name="Kumar P."/>
            <person name="Chaerkady R."/>
            <person name="Ramachandran S."/>
            <person name="Dash D."/>
            <person name="Pandey A."/>
        </authorList>
    </citation>
    <scope>ACETYLATION [LARGE SCALE ANALYSIS] AT THR-2</scope>
    <scope>CLEAVAGE OF INITIATOR METHIONINE [LARGE SCALE ANALYSIS]</scope>
    <scope>IDENTIFICATION BY MASS SPECTROMETRY [LARGE SCALE ANALYSIS]</scope>
    <source>
        <strain>ATCC 25618 / H37Rv</strain>
    </source>
</reference>
<reference key="7">
    <citation type="journal article" date="2014" name="Antimicrob. Agents Chemother.">
        <title>Pantothenate and pantetheine antagonize the antitubercular activity of pyrazinamide.</title>
        <authorList>
            <person name="Dillon N.A."/>
            <person name="Peterson N.D."/>
            <person name="Rosen B.C."/>
            <person name="Baughn A.D."/>
        </authorList>
    </citation>
    <scope>FUNCTION</scope>
    <scope>DISRUPTION PHENOTYPE</scope>
    <source>
        <strain>H37Rv</strain>
    </source>
</reference>
<reference key="8">
    <citation type="journal article" date="2003" name="Protein Sci.">
        <title>Crystal structures of a pantothenate synthetase from M. tuberculosis and its complexes with substrates and a reaction intermediate.</title>
        <authorList>
            <person name="Wang S."/>
            <person name="Eisenberg D."/>
        </authorList>
    </citation>
    <scope>X-RAY CRYSTALLOGRAPHY (1.6 ANGSTROMS) OF 1-300 OF MUTANT GLY-77 IN COMPLEX WITH SUBSTRATES; ATP ANALOG AND MAGNESIUM ION</scope>
    <scope>MUTAGENESIS OF GLU-77</scope>
    <scope>CATALYTIC ACTIVITY</scope>
    <scope>CATALYTIC MECHANISM</scope>
    <scope>SUBUNIT</scope>
</reference>
<reference key="9">
    <citation type="journal article" date="2006" name="Biochemistry">
        <title>Crystal structure of the pantothenate synthetase from Mycobacterium tuberculosis, snapshots of the enzyme in action.</title>
        <authorList>
            <person name="Wang S."/>
            <person name="Eisenberg D."/>
        </authorList>
    </citation>
    <scope>X-RAY CRYSTALLOGRAPHY (1.55 ANGSTROMS) IN COMPLEX WITH SUBSTRATE; MAGNESIUM ION AND ATP</scope>
    <scope>CATALYTIC MECHANISM</scope>
    <scope>SUBUNIT</scope>
</reference>
<keyword id="KW-0002">3D-structure</keyword>
<keyword id="KW-0007">Acetylation</keyword>
<keyword id="KW-0067">ATP-binding</keyword>
<keyword id="KW-0963">Cytoplasm</keyword>
<keyword id="KW-0903">Direct protein sequencing</keyword>
<keyword id="KW-0436">Ligase</keyword>
<keyword id="KW-0460">Magnesium</keyword>
<keyword id="KW-0479">Metal-binding</keyword>
<keyword id="KW-0547">Nucleotide-binding</keyword>
<keyword id="KW-0566">Pantothenate biosynthesis</keyword>
<keyword id="KW-1185">Reference proteome</keyword>
<keyword id="KW-0843">Virulence</keyword>